<feature type="signal peptide" evidence="1">
    <location>
        <begin position="1"/>
        <end position="19"/>
    </location>
</feature>
<feature type="chain" id="PRO_0000013784" description="Putative L,D-transpeptidase YafK">
    <location>
        <begin position="20"/>
        <end position="246"/>
    </location>
</feature>
<feature type="domain" description="L,D-TPase catalytic" evidence="2">
    <location>
        <begin position="44"/>
        <end position="174"/>
    </location>
</feature>
<feature type="active site" description="Proton donor/acceptor" evidence="2">
    <location>
        <position position="135"/>
    </location>
</feature>
<feature type="active site" description="Nucleophile" evidence="2">
    <location>
        <position position="143"/>
    </location>
</feature>
<feature type="strand" evidence="4">
    <location>
        <begin position="44"/>
        <end position="49"/>
    </location>
</feature>
<feature type="turn" evidence="4">
    <location>
        <begin position="50"/>
        <end position="53"/>
    </location>
</feature>
<feature type="strand" evidence="4">
    <location>
        <begin position="54"/>
        <end position="61"/>
    </location>
</feature>
<feature type="strand" evidence="4">
    <location>
        <begin position="64"/>
        <end position="75"/>
    </location>
</feature>
<feature type="strand" evidence="4">
    <location>
        <begin position="85"/>
        <end position="87"/>
    </location>
</feature>
<feature type="strand" evidence="4">
    <location>
        <begin position="94"/>
        <end position="100"/>
    </location>
</feature>
<feature type="turn" evidence="4">
    <location>
        <begin position="106"/>
        <end position="108"/>
    </location>
</feature>
<feature type="strand" evidence="4">
    <location>
        <begin position="109"/>
        <end position="111"/>
    </location>
</feature>
<feature type="helix" evidence="4">
    <location>
        <begin position="120"/>
        <end position="124"/>
    </location>
</feature>
<feature type="strand" evidence="4">
    <location>
        <begin position="133"/>
        <end position="137"/>
    </location>
</feature>
<feature type="strand" evidence="4">
    <location>
        <begin position="144"/>
        <end position="146"/>
    </location>
</feature>
<feature type="helix" evidence="4">
    <location>
        <begin position="148"/>
        <end position="163"/>
    </location>
</feature>
<feature type="strand" evidence="4">
    <location>
        <begin position="169"/>
        <end position="176"/>
    </location>
</feature>
<feature type="helix" evidence="4">
    <location>
        <begin position="180"/>
        <end position="185"/>
    </location>
</feature>
<feature type="turn" evidence="4">
    <location>
        <begin position="186"/>
        <end position="188"/>
    </location>
</feature>
<feature type="helix" evidence="4">
    <location>
        <begin position="192"/>
        <end position="208"/>
    </location>
</feature>
<feature type="strand" evidence="4">
    <location>
        <begin position="213"/>
        <end position="224"/>
    </location>
</feature>
<sequence length="246" mass="28021">MRKIALILAMLLIPCVSFAGLLGSSSSTTPVSKEYKQQLMGSPVYIQIFKEERTLDLYVKMGEQYQLLDSYKICKYSGGLGPKQRQGDFKSPEGFYSVQRNQLKPDSRYYKAINIGFPNAYDRAHGYEGKYLMIHGDCVSIGCYAMTNQGIDEIFQFVTGALVFGQPSVQVSIYPFRMTDANMKRHKYSNFKDFWEQLKPGYDYFEQTRKPPTVSVVNGRYVVSKPLSHEVVQPQLASNYTLPEAK</sequence>
<proteinExistence type="evidence at protein level"/>
<dbReference type="EC" id="2.-.-.-"/>
<dbReference type="EMBL" id="D38582">
    <property type="protein sequence ID" value="BAA07586.1"/>
    <property type="molecule type" value="Genomic_DNA"/>
</dbReference>
<dbReference type="EMBL" id="U70214">
    <property type="protein sequence ID" value="AAB08646.1"/>
    <property type="molecule type" value="Genomic_DNA"/>
</dbReference>
<dbReference type="EMBL" id="U00096">
    <property type="protein sequence ID" value="AAC73328.1"/>
    <property type="molecule type" value="Genomic_DNA"/>
</dbReference>
<dbReference type="EMBL" id="AP009048">
    <property type="protein sequence ID" value="BAA77894.1"/>
    <property type="molecule type" value="Genomic_DNA"/>
</dbReference>
<dbReference type="PIR" id="A64747">
    <property type="entry name" value="A64747"/>
</dbReference>
<dbReference type="RefSeq" id="NP_414759.1">
    <property type="nucleotide sequence ID" value="NC_000913.3"/>
</dbReference>
<dbReference type="PDB" id="8IKR">
    <property type="method" value="X-ray"/>
    <property type="resolution" value="2.90 A"/>
    <property type="chains" value="A/B=20-246"/>
</dbReference>
<dbReference type="PDBsum" id="8IKR"/>
<dbReference type="SMR" id="P0AA99"/>
<dbReference type="BioGRID" id="4262122">
    <property type="interactions" value="20"/>
</dbReference>
<dbReference type="FunCoup" id="P0AA99">
    <property type="interactions" value="2"/>
</dbReference>
<dbReference type="STRING" id="511145.b0224"/>
<dbReference type="MEROPS" id="C82.A01"/>
<dbReference type="PaxDb" id="511145-b0224"/>
<dbReference type="EnsemblBacteria" id="AAC73328">
    <property type="protein sequence ID" value="AAC73328"/>
    <property type="gene ID" value="b0224"/>
</dbReference>
<dbReference type="GeneID" id="944910"/>
<dbReference type="KEGG" id="ecj:JW0214"/>
<dbReference type="KEGG" id="eco:b0224"/>
<dbReference type="KEGG" id="ecoc:C3026_01060"/>
<dbReference type="KEGG" id="ecoc:C3026_23800"/>
<dbReference type="PATRIC" id="fig|511145.12.peg.226"/>
<dbReference type="EchoBASE" id="EB2942"/>
<dbReference type="eggNOG" id="COG3034">
    <property type="taxonomic scope" value="Bacteria"/>
</dbReference>
<dbReference type="HOGENOM" id="CLU_032558_2_0_6"/>
<dbReference type="InParanoid" id="P0AA99"/>
<dbReference type="OMA" id="DANMARH"/>
<dbReference type="OrthoDB" id="9809748at2"/>
<dbReference type="PhylomeDB" id="P0AA99"/>
<dbReference type="BioCyc" id="EcoCyc:G6108-MONOMER"/>
<dbReference type="BioCyc" id="MetaCyc:G6108-MONOMER"/>
<dbReference type="UniPathway" id="UPA00219"/>
<dbReference type="PRO" id="PR:P0AA99"/>
<dbReference type="Proteomes" id="UP000000625">
    <property type="component" value="Chromosome"/>
</dbReference>
<dbReference type="GO" id="GO:0004180">
    <property type="term" value="F:carboxypeptidase activity"/>
    <property type="evidence" value="ECO:0000314"/>
    <property type="project" value="EcoCyc"/>
</dbReference>
<dbReference type="GO" id="GO:0004175">
    <property type="term" value="F:endopeptidase activity"/>
    <property type="evidence" value="ECO:0000314"/>
    <property type="project" value="EcoCyc"/>
</dbReference>
<dbReference type="GO" id="GO:0016757">
    <property type="term" value="F:glycosyltransferase activity"/>
    <property type="evidence" value="ECO:0007669"/>
    <property type="project" value="UniProtKB-KW"/>
</dbReference>
<dbReference type="GO" id="GO:0071555">
    <property type="term" value="P:cell wall organization"/>
    <property type="evidence" value="ECO:0007669"/>
    <property type="project" value="UniProtKB-KW"/>
</dbReference>
<dbReference type="GO" id="GO:0009252">
    <property type="term" value="P:peptidoglycan biosynthetic process"/>
    <property type="evidence" value="ECO:0007669"/>
    <property type="project" value="UniProtKB-UniPathway"/>
</dbReference>
<dbReference type="GO" id="GO:0000270">
    <property type="term" value="P:peptidoglycan metabolic process"/>
    <property type="evidence" value="ECO:0000314"/>
    <property type="project" value="EcoCyc"/>
</dbReference>
<dbReference type="GO" id="GO:0008360">
    <property type="term" value="P:regulation of cell shape"/>
    <property type="evidence" value="ECO:0007669"/>
    <property type="project" value="UniProtKB-KW"/>
</dbReference>
<dbReference type="CDD" id="cd16913">
    <property type="entry name" value="YkuD_like"/>
    <property type="match status" value="1"/>
</dbReference>
<dbReference type="Gene3D" id="2.40.440.10">
    <property type="entry name" value="L,D-transpeptidase catalytic domain-like"/>
    <property type="match status" value="1"/>
</dbReference>
<dbReference type="InterPro" id="IPR005490">
    <property type="entry name" value="LD_TPept_cat_dom"/>
</dbReference>
<dbReference type="InterPro" id="IPR038063">
    <property type="entry name" value="Transpep_catalytic_dom"/>
</dbReference>
<dbReference type="NCBIfam" id="NF040599">
    <property type="entry name" value="LdtF_DpaA_YafK"/>
    <property type="match status" value="1"/>
</dbReference>
<dbReference type="PANTHER" id="PTHR36699:SF1">
    <property type="entry name" value="L,D-TRANSPEPTIDASE YAFK-RELATED"/>
    <property type="match status" value="1"/>
</dbReference>
<dbReference type="PANTHER" id="PTHR36699">
    <property type="entry name" value="LD-TRANSPEPTIDASE"/>
    <property type="match status" value="1"/>
</dbReference>
<dbReference type="Pfam" id="PF03734">
    <property type="entry name" value="YkuD"/>
    <property type="match status" value="1"/>
</dbReference>
<dbReference type="SUPFAM" id="SSF141523">
    <property type="entry name" value="L,D-transpeptidase catalytic domain-like"/>
    <property type="match status" value="1"/>
</dbReference>
<dbReference type="PROSITE" id="PS52029">
    <property type="entry name" value="LD_TPASE"/>
    <property type="match status" value="1"/>
</dbReference>
<name>YAFK_ECOLI</name>
<organism>
    <name type="scientific">Escherichia coli (strain K12)</name>
    <dbReference type="NCBI Taxonomy" id="83333"/>
    <lineage>
        <taxon>Bacteria</taxon>
        <taxon>Pseudomonadati</taxon>
        <taxon>Pseudomonadota</taxon>
        <taxon>Gammaproteobacteria</taxon>
        <taxon>Enterobacterales</taxon>
        <taxon>Enterobacteriaceae</taxon>
        <taxon>Escherichia</taxon>
    </lineage>
</organism>
<protein>
    <recommendedName>
        <fullName>Putative L,D-transpeptidase YafK</fullName>
        <ecNumber>2.-.-.-</ecNumber>
    </recommendedName>
</protein>
<reference key="1">
    <citation type="journal article" date="1995" name="Mutat. Res.">
        <title>dinP, a new gene in Escherichia coli, whose product shows similarities to UmuC and its homologues.</title>
        <authorList>
            <person name="Ohmori H."/>
            <person name="Hatada E."/>
            <person name="Qiao Y."/>
            <person name="Tsuji M."/>
            <person name="Fukuda R."/>
        </authorList>
    </citation>
    <scope>NUCLEOTIDE SEQUENCE [GENOMIC DNA]</scope>
    <source>
        <strain>K12 / W3110 / ATCC 27325 / DSM 5911</strain>
    </source>
</reference>
<reference key="2">
    <citation type="submission" date="1996-02" db="EMBL/GenBank/DDBJ databases">
        <title>Systematic sequencing of the Escherichia coli genome: analysis of the 4.0 - 6.0 min (189,987 - 281,416bp) region.</title>
        <authorList>
            <person name="Takemoto K."/>
            <person name="Mori H."/>
            <person name="Murayama N."/>
            <person name="Kataoka K."/>
            <person name="Yano M."/>
            <person name="Itoh T."/>
            <person name="Yamamoto Y."/>
            <person name="Inokuchi H."/>
            <person name="Miki T."/>
            <person name="Hatada E."/>
            <person name="Fukuda R."/>
            <person name="Ichihara S."/>
            <person name="Mizuno T."/>
            <person name="Makino K."/>
            <person name="Nakata A."/>
            <person name="Yura T."/>
            <person name="Sampei G."/>
            <person name="Mizobuchi K."/>
        </authorList>
    </citation>
    <scope>NUCLEOTIDE SEQUENCE [LARGE SCALE GENOMIC DNA]</scope>
    <source>
        <strain>K12 / W3110 / ATCC 27325 / DSM 5911</strain>
    </source>
</reference>
<reference key="3">
    <citation type="submission" date="1997-01" db="EMBL/GenBank/DDBJ databases">
        <title>Sequence of minutes 4-25 of Escherichia coli.</title>
        <authorList>
            <person name="Chung E."/>
            <person name="Allen E."/>
            <person name="Araujo R."/>
            <person name="Aparicio A.M."/>
            <person name="Davis K."/>
            <person name="Duncan M."/>
            <person name="Federspiel N."/>
            <person name="Hyman R."/>
            <person name="Kalman S."/>
            <person name="Komp C."/>
            <person name="Kurdi O."/>
            <person name="Lew H."/>
            <person name="Lin D."/>
            <person name="Namath A."/>
            <person name="Oefner P."/>
            <person name="Roberts D."/>
            <person name="Schramm S."/>
            <person name="Davis R.W."/>
        </authorList>
    </citation>
    <scope>NUCLEOTIDE SEQUENCE [LARGE SCALE GENOMIC DNA]</scope>
    <source>
        <strain>K12 / MG1655 / ATCC 47076</strain>
    </source>
</reference>
<reference key="4">
    <citation type="journal article" date="1997" name="Science">
        <title>The complete genome sequence of Escherichia coli K-12.</title>
        <authorList>
            <person name="Blattner F.R."/>
            <person name="Plunkett G. III"/>
            <person name="Bloch C.A."/>
            <person name="Perna N.T."/>
            <person name="Burland V."/>
            <person name="Riley M."/>
            <person name="Collado-Vides J."/>
            <person name="Glasner J.D."/>
            <person name="Rode C.K."/>
            <person name="Mayhew G.F."/>
            <person name="Gregor J."/>
            <person name="Davis N.W."/>
            <person name="Kirkpatrick H.A."/>
            <person name="Goeden M.A."/>
            <person name="Rose D.J."/>
            <person name="Mau B."/>
            <person name="Shao Y."/>
        </authorList>
    </citation>
    <scope>NUCLEOTIDE SEQUENCE [LARGE SCALE GENOMIC DNA]</scope>
    <source>
        <strain>K12 / MG1655 / ATCC 47076</strain>
    </source>
</reference>
<reference key="5">
    <citation type="journal article" date="2006" name="Mol. Syst. Biol.">
        <title>Highly accurate genome sequences of Escherichia coli K-12 strains MG1655 and W3110.</title>
        <authorList>
            <person name="Hayashi K."/>
            <person name="Morooka N."/>
            <person name="Yamamoto Y."/>
            <person name="Fujita K."/>
            <person name="Isono K."/>
            <person name="Choi S."/>
            <person name="Ohtsubo E."/>
            <person name="Baba T."/>
            <person name="Wanner B.L."/>
            <person name="Mori H."/>
            <person name="Horiuchi T."/>
        </authorList>
    </citation>
    <scope>NUCLEOTIDE SEQUENCE [LARGE SCALE GENOMIC DNA]</scope>
    <source>
        <strain>K12 / W3110 / ATCC 27325 / DSM 5911</strain>
    </source>
</reference>
<keyword id="KW-0002">3D-structure</keyword>
<keyword id="KW-0133">Cell shape</keyword>
<keyword id="KW-0961">Cell wall biogenesis/degradation</keyword>
<keyword id="KW-0328">Glycosyltransferase</keyword>
<keyword id="KW-0378">Hydrolase</keyword>
<keyword id="KW-0573">Peptidoglycan synthesis</keyword>
<keyword id="KW-1185">Reference proteome</keyword>
<keyword id="KW-0732">Signal</keyword>
<keyword id="KW-0808">Transferase</keyword>
<gene>
    <name type="primary">yafK</name>
    <name type="ordered locus">b0224</name>
    <name type="ordered locus">JW0214</name>
</gene>
<evidence type="ECO:0000255" key="1"/>
<evidence type="ECO:0000255" key="2">
    <source>
        <dbReference type="PROSITE-ProRule" id="PRU01373"/>
    </source>
</evidence>
<evidence type="ECO:0000305" key="3"/>
<evidence type="ECO:0007829" key="4">
    <source>
        <dbReference type="PDB" id="8IKR"/>
    </source>
</evidence>
<accession>P0AA99</accession>
<accession>Q47148</accession>
<comment type="pathway">
    <text>Cell wall biogenesis; peptidoglycan biosynthesis.</text>
</comment>
<comment type="similarity">
    <text evidence="3">Belongs to the YkuD family.</text>
</comment>